<proteinExistence type="inferred from homology"/>
<keyword id="KW-0413">Isomerase</keyword>
<gene>
    <name evidence="1" type="primary">rpiA</name>
    <name type="ordered locus">lpp0108</name>
</gene>
<evidence type="ECO:0000255" key="1">
    <source>
        <dbReference type="HAMAP-Rule" id="MF_00170"/>
    </source>
</evidence>
<protein>
    <recommendedName>
        <fullName evidence="1">Ribose-5-phosphate isomerase A</fullName>
        <ecNumber evidence="1">5.3.1.6</ecNumber>
    </recommendedName>
    <alternativeName>
        <fullName evidence="1">Phosphoriboisomerase A</fullName>
        <shortName evidence="1">PRI</shortName>
    </alternativeName>
</protein>
<feature type="chain" id="PRO_0000158429" description="Ribose-5-phosphate isomerase A">
    <location>
        <begin position="1"/>
        <end position="216"/>
    </location>
</feature>
<feature type="active site" description="Proton acceptor" evidence="1">
    <location>
        <position position="101"/>
    </location>
</feature>
<feature type="binding site" evidence="1">
    <location>
        <begin position="26"/>
        <end position="29"/>
    </location>
    <ligand>
        <name>substrate</name>
    </ligand>
</feature>
<feature type="binding site" evidence="1">
    <location>
        <begin position="79"/>
        <end position="82"/>
    </location>
    <ligand>
        <name>substrate</name>
    </ligand>
</feature>
<feature type="binding site" evidence="1">
    <location>
        <begin position="92"/>
        <end position="95"/>
    </location>
    <ligand>
        <name>substrate</name>
    </ligand>
</feature>
<feature type="binding site" evidence="1">
    <location>
        <position position="119"/>
    </location>
    <ligand>
        <name>substrate</name>
    </ligand>
</feature>
<reference key="1">
    <citation type="journal article" date="2004" name="Nat. Genet.">
        <title>Evidence in the Legionella pneumophila genome for exploitation of host cell functions and high genome plasticity.</title>
        <authorList>
            <person name="Cazalet C."/>
            <person name="Rusniok C."/>
            <person name="Brueggemann H."/>
            <person name="Zidane N."/>
            <person name="Magnier A."/>
            <person name="Ma L."/>
            <person name="Tichit M."/>
            <person name="Jarraud S."/>
            <person name="Bouchier C."/>
            <person name="Vandenesch F."/>
            <person name="Kunst F."/>
            <person name="Etienne J."/>
            <person name="Glaser P."/>
            <person name="Buchrieser C."/>
        </authorList>
    </citation>
    <scope>NUCLEOTIDE SEQUENCE [LARGE SCALE GENOMIC DNA]</scope>
    <source>
        <strain>Paris</strain>
    </source>
</reference>
<name>RPIA_LEGPA</name>
<organism>
    <name type="scientific">Legionella pneumophila (strain Paris)</name>
    <dbReference type="NCBI Taxonomy" id="297246"/>
    <lineage>
        <taxon>Bacteria</taxon>
        <taxon>Pseudomonadati</taxon>
        <taxon>Pseudomonadota</taxon>
        <taxon>Gammaproteobacteria</taxon>
        <taxon>Legionellales</taxon>
        <taxon>Legionellaceae</taxon>
        <taxon>Legionella</taxon>
    </lineage>
</organism>
<accession>Q5X8Y4</accession>
<dbReference type="EC" id="5.3.1.6" evidence="1"/>
<dbReference type="EMBL" id="CR628336">
    <property type="protein sequence ID" value="CAH11256.1"/>
    <property type="molecule type" value="Genomic_DNA"/>
</dbReference>
<dbReference type="RefSeq" id="WP_011212750.1">
    <property type="nucleotide sequence ID" value="NC_006368.1"/>
</dbReference>
<dbReference type="SMR" id="Q5X8Y4"/>
<dbReference type="KEGG" id="lpp:lpp0108"/>
<dbReference type="LegioList" id="lpp0108"/>
<dbReference type="HOGENOM" id="CLU_056590_1_1_6"/>
<dbReference type="UniPathway" id="UPA00115">
    <property type="reaction ID" value="UER00412"/>
</dbReference>
<dbReference type="GO" id="GO:0005829">
    <property type="term" value="C:cytosol"/>
    <property type="evidence" value="ECO:0007669"/>
    <property type="project" value="TreeGrafter"/>
</dbReference>
<dbReference type="GO" id="GO:0004751">
    <property type="term" value="F:ribose-5-phosphate isomerase activity"/>
    <property type="evidence" value="ECO:0007669"/>
    <property type="project" value="UniProtKB-UniRule"/>
</dbReference>
<dbReference type="GO" id="GO:0006014">
    <property type="term" value="P:D-ribose metabolic process"/>
    <property type="evidence" value="ECO:0007669"/>
    <property type="project" value="TreeGrafter"/>
</dbReference>
<dbReference type="GO" id="GO:0009052">
    <property type="term" value="P:pentose-phosphate shunt, non-oxidative branch"/>
    <property type="evidence" value="ECO:0007669"/>
    <property type="project" value="UniProtKB-UniRule"/>
</dbReference>
<dbReference type="CDD" id="cd01398">
    <property type="entry name" value="RPI_A"/>
    <property type="match status" value="1"/>
</dbReference>
<dbReference type="FunFam" id="3.30.70.260:FF:000004">
    <property type="entry name" value="Ribose-5-phosphate isomerase A"/>
    <property type="match status" value="1"/>
</dbReference>
<dbReference type="FunFam" id="3.40.50.1360:FF:000001">
    <property type="entry name" value="Ribose-5-phosphate isomerase A"/>
    <property type="match status" value="1"/>
</dbReference>
<dbReference type="Gene3D" id="3.30.70.260">
    <property type="match status" value="1"/>
</dbReference>
<dbReference type="Gene3D" id="3.40.50.1360">
    <property type="match status" value="1"/>
</dbReference>
<dbReference type="HAMAP" id="MF_00170">
    <property type="entry name" value="Rib_5P_isom_A"/>
    <property type="match status" value="1"/>
</dbReference>
<dbReference type="InterPro" id="IPR037171">
    <property type="entry name" value="NagB/RpiA_transferase-like"/>
</dbReference>
<dbReference type="InterPro" id="IPR020672">
    <property type="entry name" value="Ribose5P_isomerase_typA_subgr"/>
</dbReference>
<dbReference type="InterPro" id="IPR004788">
    <property type="entry name" value="Ribose5P_isomerase_type_A"/>
</dbReference>
<dbReference type="NCBIfam" id="NF001924">
    <property type="entry name" value="PRK00702.1"/>
    <property type="match status" value="1"/>
</dbReference>
<dbReference type="NCBIfam" id="TIGR00021">
    <property type="entry name" value="rpiA"/>
    <property type="match status" value="1"/>
</dbReference>
<dbReference type="PANTHER" id="PTHR11934">
    <property type="entry name" value="RIBOSE-5-PHOSPHATE ISOMERASE"/>
    <property type="match status" value="1"/>
</dbReference>
<dbReference type="PANTHER" id="PTHR11934:SF0">
    <property type="entry name" value="RIBOSE-5-PHOSPHATE ISOMERASE"/>
    <property type="match status" value="1"/>
</dbReference>
<dbReference type="Pfam" id="PF06026">
    <property type="entry name" value="Rib_5-P_isom_A"/>
    <property type="match status" value="1"/>
</dbReference>
<dbReference type="SUPFAM" id="SSF75445">
    <property type="entry name" value="D-ribose-5-phosphate isomerase (RpiA), lid domain"/>
    <property type="match status" value="1"/>
</dbReference>
<dbReference type="SUPFAM" id="SSF100950">
    <property type="entry name" value="NagB/RpiA/CoA transferase-like"/>
    <property type="match status" value="1"/>
</dbReference>
<comment type="function">
    <text evidence="1">Catalyzes the reversible conversion of ribose-5-phosphate to ribulose 5-phosphate.</text>
</comment>
<comment type="catalytic activity">
    <reaction evidence="1">
        <text>aldehydo-D-ribose 5-phosphate = D-ribulose 5-phosphate</text>
        <dbReference type="Rhea" id="RHEA:14657"/>
        <dbReference type="ChEBI" id="CHEBI:58121"/>
        <dbReference type="ChEBI" id="CHEBI:58273"/>
        <dbReference type="EC" id="5.3.1.6"/>
    </reaction>
</comment>
<comment type="pathway">
    <text evidence="1">Carbohydrate degradation; pentose phosphate pathway; D-ribose 5-phosphate from D-ribulose 5-phosphate (non-oxidative stage): step 1/1.</text>
</comment>
<comment type="subunit">
    <text evidence="1">Homodimer.</text>
</comment>
<comment type="similarity">
    <text evidence="1">Belongs to the ribose 5-phosphate isomerase family.</text>
</comment>
<sequence length="216" mass="23035">MSELKIKAAKAAIAYIEDDMVIGVGTGSTVNFFIKELAAIKHKIEACVASSKATEALLRAEGIPVIDLNSVQDLPIYVDGADEVNERGEMIKGGGGALTREKIVANVATQFICIVDESKVVKRLGEFPVAVEVVPMARSFVARQIVKLGGDPEYREGFVTDNGNIILDVFNLNFSTPMALEDSLNVIPGVVENGVFAKRLADKVLVASASGVNNLK</sequence>